<keyword id="KW-1003">Cell membrane</keyword>
<keyword id="KW-0378">Hydrolase</keyword>
<keyword id="KW-0472">Membrane</keyword>
<keyword id="KW-0479">Metal-binding</keyword>
<keyword id="KW-0482">Metalloprotease</keyword>
<keyword id="KW-0645">Protease</keyword>
<keyword id="KW-1185">Reference proteome</keyword>
<keyword id="KW-0812">Transmembrane</keyword>
<keyword id="KW-1133">Transmembrane helix</keyword>
<keyword id="KW-0862">Zinc</keyword>
<organism>
    <name type="scientific">Streptococcus pneumoniae serotype 4 (strain ATCC BAA-334 / TIGR4)</name>
    <dbReference type="NCBI Taxonomy" id="170187"/>
    <lineage>
        <taxon>Bacteria</taxon>
        <taxon>Bacillati</taxon>
        <taxon>Bacillota</taxon>
        <taxon>Bacilli</taxon>
        <taxon>Lactobacillales</taxon>
        <taxon>Streptococcaceae</taxon>
        <taxon>Streptococcus</taxon>
    </lineage>
</organism>
<name>Y263_STRPN</name>
<accession>Q97SR2</accession>
<dbReference type="EC" id="3.4.24.-"/>
<dbReference type="EMBL" id="AE005672">
    <property type="protein sequence ID" value="AAK74441.1"/>
    <property type="molecule type" value="Genomic_DNA"/>
</dbReference>
<dbReference type="PIR" id="H95030">
    <property type="entry name" value="H95030"/>
</dbReference>
<dbReference type="SMR" id="Q97SR2"/>
<dbReference type="PaxDb" id="170187-SP_0263"/>
<dbReference type="EnsemblBacteria" id="AAK74441">
    <property type="protein sequence ID" value="AAK74441"/>
    <property type="gene ID" value="SP_0263"/>
</dbReference>
<dbReference type="KEGG" id="spn:SP_0263"/>
<dbReference type="eggNOG" id="COG0750">
    <property type="taxonomic scope" value="Bacteria"/>
</dbReference>
<dbReference type="PhylomeDB" id="Q97SR2"/>
<dbReference type="BioCyc" id="SPNE170187:G1FZB-270-MONOMER"/>
<dbReference type="Proteomes" id="UP000000585">
    <property type="component" value="Chromosome"/>
</dbReference>
<dbReference type="GO" id="GO:0005886">
    <property type="term" value="C:plasma membrane"/>
    <property type="evidence" value="ECO:0007669"/>
    <property type="project" value="UniProtKB-SubCell"/>
</dbReference>
<dbReference type="GO" id="GO:0046872">
    <property type="term" value="F:metal ion binding"/>
    <property type="evidence" value="ECO:0007669"/>
    <property type="project" value="UniProtKB-KW"/>
</dbReference>
<dbReference type="GO" id="GO:0004222">
    <property type="term" value="F:metalloendopeptidase activity"/>
    <property type="evidence" value="ECO:0007669"/>
    <property type="project" value="InterPro"/>
</dbReference>
<dbReference type="GO" id="GO:0006508">
    <property type="term" value="P:proteolysis"/>
    <property type="evidence" value="ECO:0007669"/>
    <property type="project" value="UniProtKB-KW"/>
</dbReference>
<dbReference type="CDD" id="cd06163">
    <property type="entry name" value="S2P-M50_PDZ_RseP-like"/>
    <property type="match status" value="1"/>
</dbReference>
<dbReference type="Gene3D" id="2.30.42.10">
    <property type="match status" value="1"/>
</dbReference>
<dbReference type="InterPro" id="IPR036034">
    <property type="entry name" value="PDZ_sf"/>
</dbReference>
<dbReference type="InterPro" id="IPR004387">
    <property type="entry name" value="Pept_M50_Zn"/>
</dbReference>
<dbReference type="InterPro" id="IPR008915">
    <property type="entry name" value="Peptidase_M50"/>
</dbReference>
<dbReference type="NCBIfam" id="TIGR00054">
    <property type="entry name" value="RIP metalloprotease RseP"/>
    <property type="match status" value="1"/>
</dbReference>
<dbReference type="PANTHER" id="PTHR42837:SF2">
    <property type="entry name" value="MEMBRANE METALLOPROTEASE ARASP2, CHLOROPLASTIC-RELATED"/>
    <property type="match status" value="1"/>
</dbReference>
<dbReference type="PANTHER" id="PTHR42837">
    <property type="entry name" value="REGULATOR OF SIGMA-E PROTEASE RSEP"/>
    <property type="match status" value="1"/>
</dbReference>
<dbReference type="Pfam" id="PF02163">
    <property type="entry name" value="Peptidase_M50"/>
    <property type="match status" value="1"/>
</dbReference>
<dbReference type="PROSITE" id="PS00142">
    <property type="entry name" value="ZINC_PROTEASE"/>
    <property type="match status" value="1"/>
</dbReference>
<evidence type="ECO:0000255" key="1"/>
<evidence type="ECO:0000255" key="2">
    <source>
        <dbReference type="PROSITE-ProRule" id="PRU10095"/>
    </source>
</evidence>
<evidence type="ECO:0000305" key="3"/>
<feature type="chain" id="PRO_0000088466" description="Putative zinc metalloprotease SP_0263">
    <location>
        <begin position="1"/>
        <end position="419"/>
    </location>
</feature>
<feature type="transmembrane region" description="Helical" evidence="1">
    <location>
        <begin position="169"/>
        <end position="191"/>
    </location>
</feature>
<feature type="transmembrane region" description="Helical" evidence="1">
    <location>
        <begin position="345"/>
        <end position="367"/>
    </location>
</feature>
<feature type="transmembrane region" description="Helical" evidence="1">
    <location>
        <begin position="388"/>
        <end position="410"/>
    </location>
</feature>
<feature type="active site" evidence="2">
    <location>
        <position position="19"/>
    </location>
</feature>
<feature type="binding site" evidence="2">
    <location>
        <position position="18"/>
    </location>
    <ligand>
        <name>Zn(2+)</name>
        <dbReference type="ChEBI" id="CHEBI:29105"/>
        <note>catalytic</note>
    </ligand>
</feature>
<feature type="binding site" evidence="2">
    <location>
        <position position="22"/>
    </location>
    <ligand>
        <name>Zn(2+)</name>
        <dbReference type="ChEBI" id="CHEBI:29105"/>
        <note>catalytic</note>
    </ligand>
</feature>
<comment type="cofactor">
    <cofactor evidence="3">
        <name>Zn(2+)</name>
        <dbReference type="ChEBI" id="CHEBI:29105"/>
    </cofactor>
</comment>
<comment type="subcellular location">
    <subcellularLocation>
        <location evidence="3">Cell membrane</location>
        <topology evidence="3">Multi-pass membrane protein</topology>
    </subcellularLocation>
</comment>
<comment type="similarity">
    <text evidence="3">Belongs to the peptidase M50B family.</text>
</comment>
<protein>
    <recommendedName>
        <fullName>Putative zinc metalloprotease SP_0263</fullName>
        <ecNumber>3.4.24.-</ecNumber>
    </recommendedName>
</protein>
<reference key="1">
    <citation type="journal article" date="2001" name="Science">
        <title>Complete genome sequence of a virulent isolate of Streptococcus pneumoniae.</title>
        <authorList>
            <person name="Tettelin H."/>
            <person name="Nelson K.E."/>
            <person name="Paulsen I.T."/>
            <person name="Eisen J.A."/>
            <person name="Read T.D."/>
            <person name="Peterson S.N."/>
            <person name="Heidelberg J.F."/>
            <person name="DeBoy R.T."/>
            <person name="Haft D.H."/>
            <person name="Dodson R.J."/>
            <person name="Durkin A.S."/>
            <person name="Gwinn M.L."/>
            <person name="Kolonay J.F."/>
            <person name="Nelson W.C."/>
            <person name="Peterson J.D."/>
            <person name="Umayam L.A."/>
            <person name="White O."/>
            <person name="Salzberg S.L."/>
            <person name="Lewis M.R."/>
            <person name="Radune D."/>
            <person name="Holtzapple E.K."/>
            <person name="Khouri H.M."/>
            <person name="Wolf A.M."/>
            <person name="Utterback T.R."/>
            <person name="Hansen C.L."/>
            <person name="McDonald L.A."/>
            <person name="Feldblyum T.V."/>
            <person name="Angiuoli S.V."/>
            <person name="Dickinson T."/>
            <person name="Hickey E.K."/>
            <person name="Holt I.E."/>
            <person name="Loftus B.J."/>
            <person name="Yang F."/>
            <person name="Smith H.O."/>
            <person name="Venter J.C."/>
            <person name="Dougherty B.A."/>
            <person name="Morrison D.A."/>
            <person name="Hollingshead S.K."/>
            <person name="Fraser C.M."/>
        </authorList>
    </citation>
    <scope>NUCLEOTIDE SEQUENCE [LARGE SCALE GENOMIC DNA]</scope>
    <source>
        <strain>ATCC BAA-334 / TIGR4</strain>
    </source>
</reference>
<sequence>MLGILTFILVFGIIVVVHEFGHFYFAKKSGILVREFAIGMGPKIFAHIGKDGTAYTIRILPLGGYVRMAGWGDDTTEIKTGTPVSLTLADDGKVKRINLSGKKLDQTALPMQVTQFDFEDKLFIKGLVLEEEKTFAVDHDATVVEADGTEVRIAPLDVQYQNATIWGKLITNFAGPMNNFILGVVVFWVLIFMQGGVRDVDTNQFHIMPQGALAKVGVPEMAQITKIGSHEVSNWESLIQAVETETKDKTAPTLDVTISEKGSDKQVTVTPKDSQGRYLLGVQPGVKSDFLSMFVGGFTTAADSALRILSALKNLIFQPDLNKLGGPVAIFKASSDAAKNGIENILYFLAMISINIGIFNLIPIPALDGGKIVLNILEAIRRKPLKQEIETYVTLAGVVIMVVLMIAVTWNDIMRLFFR</sequence>
<proteinExistence type="inferred from homology"/>
<gene>
    <name type="ordered locus">SP_0263</name>
</gene>